<protein>
    <recommendedName>
        <fullName evidence="1">Nucleoside triphosphate/diphosphate phosphatase</fullName>
        <ecNumber evidence="1">3.6.1.15</ecNumber>
        <ecNumber evidence="1">3.6.1.6</ecNumber>
    </recommendedName>
</protein>
<name>NTDP_BACC1</name>
<proteinExistence type="inferred from homology"/>
<comment type="function">
    <text evidence="1">Has nucleoside phosphatase activity towards nucleoside triphosphates and nucleoside diphosphates.</text>
</comment>
<comment type="catalytic activity">
    <reaction evidence="1">
        <text>a ribonucleoside 5'-triphosphate + H2O = a ribonucleoside 5'-diphosphate + phosphate + H(+)</text>
        <dbReference type="Rhea" id="RHEA:23680"/>
        <dbReference type="ChEBI" id="CHEBI:15377"/>
        <dbReference type="ChEBI" id="CHEBI:15378"/>
        <dbReference type="ChEBI" id="CHEBI:43474"/>
        <dbReference type="ChEBI" id="CHEBI:57930"/>
        <dbReference type="ChEBI" id="CHEBI:61557"/>
        <dbReference type="EC" id="3.6.1.15"/>
    </reaction>
</comment>
<comment type="catalytic activity">
    <reaction evidence="1">
        <text>a ribonucleoside 5'-diphosphate + H2O = a ribonucleoside 5'-phosphate + phosphate + H(+)</text>
        <dbReference type="Rhea" id="RHEA:36799"/>
        <dbReference type="ChEBI" id="CHEBI:15377"/>
        <dbReference type="ChEBI" id="CHEBI:15378"/>
        <dbReference type="ChEBI" id="CHEBI:43474"/>
        <dbReference type="ChEBI" id="CHEBI:57930"/>
        <dbReference type="ChEBI" id="CHEBI:58043"/>
        <dbReference type="EC" id="3.6.1.6"/>
    </reaction>
</comment>
<comment type="cofactor">
    <cofactor evidence="1">
        <name>Mg(2+)</name>
        <dbReference type="ChEBI" id="CHEBI:18420"/>
    </cofactor>
</comment>
<comment type="similarity">
    <text evidence="1">Belongs to the Ntdp family.</text>
</comment>
<organism>
    <name type="scientific">Bacillus cereus (strain ATCC 10987 / NRS 248)</name>
    <dbReference type="NCBI Taxonomy" id="222523"/>
    <lineage>
        <taxon>Bacteria</taxon>
        <taxon>Bacillati</taxon>
        <taxon>Bacillota</taxon>
        <taxon>Bacilli</taxon>
        <taxon>Bacillales</taxon>
        <taxon>Bacillaceae</taxon>
        <taxon>Bacillus</taxon>
        <taxon>Bacillus cereus group</taxon>
    </lineage>
</organism>
<sequence>MGFPKEGEKVQIHSYKHNGSIHRMWEETTILKGTQSLVIGANDRTVVTESDGRTWITREPAICYFHANYWFNVIGMLREEGVYYYCNLSSPFAYDSEALKYIDYDLDIKVYPDMTYTLLDEDEYEKHSQIMQYPPVIDTILKRNVAQLTQWIHQRKGPFAPDFVDMWYERYLMYRN</sequence>
<feature type="chain" id="PRO_0000248085" description="Nucleoside triphosphate/diphosphate phosphatase">
    <location>
        <begin position="1"/>
        <end position="176"/>
    </location>
</feature>
<feature type="active site" description="Proton donor" evidence="1">
    <location>
        <position position="23"/>
    </location>
</feature>
<feature type="binding site" evidence="1">
    <location>
        <position position="87"/>
    </location>
    <ligand>
        <name>Mg(2+)</name>
        <dbReference type="ChEBI" id="CHEBI:18420"/>
        <label>1</label>
    </ligand>
</feature>
<feature type="binding site" evidence="1">
    <location>
        <position position="103"/>
    </location>
    <ligand>
        <name>Mg(2+)</name>
        <dbReference type="ChEBI" id="CHEBI:18420"/>
        <label>1</label>
    </ligand>
</feature>
<feature type="binding site" evidence="1">
    <location>
        <position position="105"/>
    </location>
    <ligand>
        <name>Mg(2+)</name>
        <dbReference type="ChEBI" id="CHEBI:18420"/>
        <label>2</label>
    </ligand>
</feature>
<feature type="binding site" evidence="1">
    <location>
        <position position="107"/>
    </location>
    <ligand>
        <name>Mg(2+)</name>
        <dbReference type="ChEBI" id="CHEBI:18420"/>
        <label>1</label>
    </ligand>
</feature>
<feature type="binding site" evidence="1">
    <location>
        <position position="107"/>
    </location>
    <ligand>
        <name>Mg(2+)</name>
        <dbReference type="ChEBI" id="CHEBI:18420"/>
        <label>2</label>
    </ligand>
</feature>
<feature type="binding site" evidence="1">
    <location>
        <position position="120"/>
    </location>
    <ligand>
        <name>Mg(2+)</name>
        <dbReference type="ChEBI" id="CHEBI:18420"/>
        <label>2</label>
    </ligand>
</feature>
<feature type="binding site" evidence="1">
    <location>
        <position position="123"/>
    </location>
    <ligand>
        <name>Mg(2+)</name>
        <dbReference type="ChEBI" id="CHEBI:18420"/>
        <label>2</label>
    </ligand>
</feature>
<gene>
    <name type="ordered locus">BCE_0582</name>
</gene>
<reference key="1">
    <citation type="journal article" date="2004" name="Nucleic Acids Res.">
        <title>The genome sequence of Bacillus cereus ATCC 10987 reveals metabolic adaptations and a large plasmid related to Bacillus anthracis pXO1.</title>
        <authorList>
            <person name="Rasko D.A."/>
            <person name="Ravel J."/>
            <person name="Oekstad O.A."/>
            <person name="Helgason E."/>
            <person name="Cer R.Z."/>
            <person name="Jiang L."/>
            <person name="Shores K.A."/>
            <person name="Fouts D.E."/>
            <person name="Tourasse N.J."/>
            <person name="Angiuoli S.V."/>
            <person name="Kolonay J.F."/>
            <person name="Nelson W.C."/>
            <person name="Kolstoe A.-B."/>
            <person name="Fraser C.M."/>
            <person name="Read T.D."/>
        </authorList>
    </citation>
    <scope>NUCLEOTIDE SEQUENCE [LARGE SCALE GENOMIC DNA]</scope>
    <source>
        <strain>ATCC 10987 / NRS 248</strain>
    </source>
</reference>
<evidence type="ECO:0000255" key="1">
    <source>
        <dbReference type="HAMAP-Rule" id="MF_01568"/>
    </source>
</evidence>
<keyword id="KW-0378">Hydrolase</keyword>
<keyword id="KW-0460">Magnesium</keyword>
<keyword id="KW-0479">Metal-binding</keyword>
<accession>Q73DX8</accession>
<dbReference type="EC" id="3.6.1.15" evidence="1"/>
<dbReference type="EC" id="3.6.1.6" evidence="1"/>
<dbReference type="EMBL" id="AE017194">
    <property type="protein sequence ID" value="AAS39517.1"/>
    <property type="molecule type" value="Genomic_DNA"/>
</dbReference>
<dbReference type="SMR" id="Q73DX8"/>
<dbReference type="DNASU" id="2752760"/>
<dbReference type="KEGG" id="bca:BCE_0582"/>
<dbReference type="HOGENOM" id="CLU_109787_1_0_9"/>
<dbReference type="Proteomes" id="UP000002527">
    <property type="component" value="Chromosome"/>
</dbReference>
<dbReference type="GO" id="GO:0000287">
    <property type="term" value="F:magnesium ion binding"/>
    <property type="evidence" value="ECO:0007669"/>
    <property type="project" value="UniProtKB-UniRule"/>
</dbReference>
<dbReference type="GO" id="GO:0017110">
    <property type="term" value="F:nucleoside diphosphate phosphatase activity"/>
    <property type="evidence" value="ECO:0007669"/>
    <property type="project" value="UniProtKB-UniRule"/>
</dbReference>
<dbReference type="GO" id="GO:0017111">
    <property type="term" value="F:ribonucleoside triphosphate phosphatase activity"/>
    <property type="evidence" value="ECO:0007669"/>
    <property type="project" value="UniProtKB-UniRule"/>
</dbReference>
<dbReference type="Gene3D" id="2.40.380.10">
    <property type="entry name" value="FomD-like"/>
    <property type="match status" value="1"/>
</dbReference>
<dbReference type="HAMAP" id="MF_01568">
    <property type="entry name" value="Ntdp"/>
    <property type="match status" value="1"/>
</dbReference>
<dbReference type="InterPro" id="IPR007295">
    <property type="entry name" value="DUF402"/>
</dbReference>
<dbReference type="InterPro" id="IPR035930">
    <property type="entry name" value="FomD-like_sf"/>
</dbReference>
<dbReference type="InterPro" id="IPR050212">
    <property type="entry name" value="Ntdp-like"/>
</dbReference>
<dbReference type="InterPro" id="IPR016882">
    <property type="entry name" value="SA1684"/>
</dbReference>
<dbReference type="NCBIfam" id="NF010183">
    <property type="entry name" value="PRK13662.1"/>
    <property type="match status" value="1"/>
</dbReference>
<dbReference type="PANTHER" id="PTHR39159">
    <property type="match status" value="1"/>
</dbReference>
<dbReference type="PANTHER" id="PTHR39159:SF1">
    <property type="entry name" value="UPF0374 PROTEIN YGAC"/>
    <property type="match status" value="1"/>
</dbReference>
<dbReference type="Pfam" id="PF04167">
    <property type="entry name" value="DUF402"/>
    <property type="match status" value="1"/>
</dbReference>
<dbReference type="PIRSF" id="PIRSF028345">
    <property type="entry name" value="UCP028345"/>
    <property type="match status" value="1"/>
</dbReference>
<dbReference type="SUPFAM" id="SSF159234">
    <property type="entry name" value="FomD-like"/>
    <property type="match status" value="1"/>
</dbReference>